<gene>
    <name evidence="1" type="primary">rpsS</name>
    <name type="ordered locus">SAG0062</name>
</gene>
<feature type="chain" id="PRO_0000129919" description="Small ribosomal subunit protein uS19">
    <location>
        <begin position="1"/>
        <end position="92"/>
    </location>
</feature>
<proteinExistence type="inferred from homology"/>
<reference key="1">
    <citation type="journal article" date="2002" name="Proc. Natl. Acad. Sci. U.S.A.">
        <title>Complete genome sequence and comparative genomic analysis of an emerging human pathogen, serotype V Streptococcus agalactiae.</title>
        <authorList>
            <person name="Tettelin H."/>
            <person name="Masignani V."/>
            <person name="Cieslewicz M.J."/>
            <person name="Eisen J.A."/>
            <person name="Peterson S.N."/>
            <person name="Wessels M.R."/>
            <person name="Paulsen I.T."/>
            <person name="Nelson K.E."/>
            <person name="Margarit I."/>
            <person name="Read T.D."/>
            <person name="Madoff L.C."/>
            <person name="Wolf A.M."/>
            <person name="Beanan M.J."/>
            <person name="Brinkac L.M."/>
            <person name="Daugherty S.C."/>
            <person name="DeBoy R.T."/>
            <person name="Durkin A.S."/>
            <person name="Kolonay J.F."/>
            <person name="Madupu R."/>
            <person name="Lewis M.R."/>
            <person name="Radune D."/>
            <person name="Fedorova N.B."/>
            <person name="Scanlan D."/>
            <person name="Khouri H.M."/>
            <person name="Mulligan S."/>
            <person name="Carty H.A."/>
            <person name="Cline R.T."/>
            <person name="Van Aken S.E."/>
            <person name="Gill J."/>
            <person name="Scarselli M."/>
            <person name="Mora M."/>
            <person name="Iacobini E.T."/>
            <person name="Brettoni C."/>
            <person name="Galli G."/>
            <person name="Mariani M."/>
            <person name="Vegni F."/>
            <person name="Maione D."/>
            <person name="Rinaudo D."/>
            <person name="Rappuoli R."/>
            <person name="Telford J.L."/>
            <person name="Kasper D.L."/>
            <person name="Grandi G."/>
            <person name="Fraser C.M."/>
        </authorList>
    </citation>
    <scope>NUCLEOTIDE SEQUENCE [LARGE SCALE GENOMIC DNA]</scope>
    <source>
        <strain>ATCC BAA-611 / 2603 V/R</strain>
    </source>
</reference>
<name>RS19_STRA5</name>
<accession>P66500</accession>
<accession>Q9A1X0</accession>
<evidence type="ECO:0000255" key="1">
    <source>
        <dbReference type="HAMAP-Rule" id="MF_00531"/>
    </source>
</evidence>
<evidence type="ECO:0000305" key="2"/>
<protein>
    <recommendedName>
        <fullName evidence="1">Small ribosomal subunit protein uS19</fullName>
    </recommendedName>
    <alternativeName>
        <fullName evidence="2">30S ribosomal protein S19</fullName>
    </alternativeName>
</protein>
<keyword id="KW-1185">Reference proteome</keyword>
<keyword id="KW-0687">Ribonucleoprotein</keyword>
<keyword id="KW-0689">Ribosomal protein</keyword>
<keyword id="KW-0694">RNA-binding</keyword>
<keyword id="KW-0699">rRNA-binding</keyword>
<sequence>MGRSLKKGPFVDEHLMKKVEAQANDEKKKVIKTWSRRSTIFPSFIGYTIAVYDGRKHVPVYIQEDMVGHKLGEFAPTRTYKGHAADDKKTRR</sequence>
<comment type="function">
    <text evidence="1">Protein S19 forms a complex with S13 that binds strongly to the 16S ribosomal RNA.</text>
</comment>
<comment type="similarity">
    <text evidence="1">Belongs to the universal ribosomal protein uS19 family.</text>
</comment>
<organism>
    <name type="scientific">Streptococcus agalactiae serotype V (strain ATCC BAA-611 / 2603 V/R)</name>
    <dbReference type="NCBI Taxonomy" id="208435"/>
    <lineage>
        <taxon>Bacteria</taxon>
        <taxon>Bacillati</taxon>
        <taxon>Bacillota</taxon>
        <taxon>Bacilli</taxon>
        <taxon>Lactobacillales</taxon>
        <taxon>Streptococcaceae</taxon>
        <taxon>Streptococcus</taxon>
    </lineage>
</organism>
<dbReference type="EMBL" id="AE009948">
    <property type="protein sequence ID" value="AAM98970.1"/>
    <property type="molecule type" value="Genomic_DNA"/>
</dbReference>
<dbReference type="RefSeq" id="NP_687098.1">
    <property type="nucleotide sequence ID" value="NC_004116.1"/>
</dbReference>
<dbReference type="RefSeq" id="WP_000533765.1">
    <property type="nucleotide sequence ID" value="NC_004116.1"/>
</dbReference>
<dbReference type="SMR" id="P66500"/>
<dbReference type="STRING" id="208435.SAG0062"/>
<dbReference type="GeneID" id="98392396"/>
<dbReference type="KEGG" id="sag:SAG0062"/>
<dbReference type="PATRIC" id="fig|208435.3.peg.61"/>
<dbReference type="HOGENOM" id="CLU_144911_0_1_9"/>
<dbReference type="OrthoDB" id="9797833at2"/>
<dbReference type="PRO" id="PR:P66500"/>
<dbReference type="Proteomes" id="UP000000821">
    <property type="component" value="Chromosome"/>
</dbReference>
<dbReference type="GO" id="GO:0005737">
    <property type="term" value="C:cytoplasm"/>
    <property type="evidence" value="ECO:0007669"/>
    <property type="project" value="UniProtKB-ARBA"/>
</dbReference>
<dbReference type="GO" id="GO:0015935">
    <property type="term" value="C:small ribosomal subunit"/>
    <property type="evidence" value="ECO:0007669"/>
    <property type="project" value="InterPro"/>
</dbReference>
<dbReference type="GO" id="GO:0019843">
    <property type="term" value="F:rRNA binding"/>
    <property type="evidence" value="ECO:0007669"/>
    <property type="project" value="UniProtKB-UniRule"/>
</dbReference>
<dbReference type="GO" id="GO:0003735">
    <property type="term" value="F:structural constituent of ribosome"/>
    <property type="evidence" value="ECO:0007669"/>
    <property type="project" value="InterPro"/>
</dbReference>
<dbReference type="GO" id="GO:0000028">
    <property type="term" value="P:ribosomal small subunit assembly"/>
    <property type="evidence" value="ECO:0007669"/>
    <property type="project" value="TreeGrafter"/>
</dbReference>
<dbReference type="GO" id="GO:0006412">
    <property type="term" value="P:translation"/>
    <property type="evidence" value="ECO:0007669"/>
    <property type="project" value="UniProtKB-UniRule"/>
</dbReference>
<dbReference type="FunFam" id="3.30.860.10:FF:000001">
    <property type="entry name" value="30S ribosomal protein S19"/>
    <property type="match status" value="1"/>
</dbReference>
<dbReference type="Gene3D" id="3.30.860.10">
    <property type="entry name" value="30s Ribosomal Protein S19, Chain A"/>
    <property type="match status" value="1"/>
</dbReference>
<dbReference type="HAMAP" id="MF_00531">
    <property type="entry name" value="Ribosomal_uS19"/>
    <property type="match status" value="1"/>
</dbReference>
<dbReference type="InterPro" id="IPR002222">
    <property type="entry name" value="Ribosomal_uS19"/>
</dbReference>
<dbReference type="InterPro" id="IPR005732">
    <property type="entry name" value="Ribosomal_uS19_bac-type"/>
</dbReference>
<dbReference type="InterPro" id="IPR020934">
    <property type="entry name" value="Ribosomal_uS19_CS"/>
</dbReference>
<dbReference type="InterPro" id="IPR023575">
    <property type="entry name" value="Ribosomal_uS19_SF"/>
</dbReference>
<dbReference type="NCBIfam" id="TIGR01050">
    <property type="entry name" value="rpsS_bact"/>
    <property type="match status" value="1"/>
</dbReference>
<dbReference type="PANTHER" id="PTHR11880">
    <property type="entry name" value="RIBOSOMAL PROTEIN S19P FAMILY MEMBER"/>
    <property type="match status" value="1"/>
</dbReference>
<dbReference type="PANTHER" id="PTHR11880:SF8">
    <property type="entry name" value="SMALL RIBOSOMAL SUBUNIT PROTEIN US19M"/>
    <property type="match status" value="1"/>
</dbReference>
<dbReference type="Pfam" id="PF00203">
    <property type="entry name" value="Ribosomal_S19"/>
    <property type="match status" value="1"/>
</dbReference>
<dbReference type="PIRSF" id="PIRSF002144">
    <property type="entry name" value="Ribosomal_S19"/>
    <property type="match status" value="1"/>
</dbReference>
<dbReference type="PRINTS" id="PR00975">
    <property type="entry name" value="RIBOSOMALS19"/>
</dbReference>
<dbReference type="SUPFAM" id="SSF54570">
    <property type="entry name" value="Ribosomal protein S19"/>
    <property type="match status" value="1"/>
</dbReference>
<dbReference type="PROSITE" id="PS00323">
    <property type="entry name" value="RIBOSOMAL_S19"/>
    <property type="match status" value="1"/>
</dbReference>